<organism>
    <name type="scientific">Human papillomavirus 28</name>
    <dbReference type="NCBI Taxonomy" id="37111"/>
    <lineage>
        <taxon>Viruses</taxon>
        <taxon>Monodnaviria</taxon>
        <taxon>Shotokuvirae</taxon>
        <taxon>Cossaviricota</taxon>
        <taxon>Papovaviricetes</taxon>
        <taxon>Zurhausenvirales</taxon>
        <taxon>Papillomaviridae</taxon>
        <taxon>Firstpapillomavirinae</taxon>
        <taxon>Alphapapillomavirus</taxon>
        <taxon>Alphapapillomavirus 2</taxon>
    </lineage>
</organism>
<name>VE8E2_HPV28</name>
<organismHost>
    <name type="scientific">Homo sapiens</name>
    <name type="common">Human</name>
    <dbReference type="NCBI Taxonomy" id="9606"/>
</organismHost>
<feature type="chain" id="PRO_0000438744" description="Protein E8^E2C">
    <location>
        <begin position="1"/>
        <end position="176"/>
    </location>
</feature>
<feature type="region of interest" description="Disordered" evidence="2">
    <location>
        <begin position="1"/>
        <end position="70"/>
    </location>
</feature>
<feature type="compositionally biased region" description="Polar residues" evidence="2">
    <location>
        <begin position="18"/>
        <end position="37"/>
    </location>
</feature>
<feature type="compositionally biased region" description="Polar residues" evidence="2">
    <location>
        <begin position="46"/>
        <end position="66"/>
    </location>
</feature>
<comment type="function">
    <text evidence="1">Plays a role in limiting the replication of viral DNA in keratinocytes. Recruits the host NCoR/SMRT complex to viral replication foci to mediate repression of both viral replication and transcription.</text>
</comment>
<comment type="subcellular location">
    <subcellularLocation>
        <location evidence="1">Host nucleus</location>
    </subcellularLocation>
</comment>
<comment type="similarity">
    <text evidence="3">Belongs to the papillomaviridae E8^E2C protein family.</text>
</comment>
<protein>
    <recommendedName>
        <fullName>Protein E8^E2C</fullName>
    </recommendedName>
</protein>
<proteinExistence type="inferred from homology"/>
<sequence length="176" mass="19846">MAKHSTREIPAAGPLCTGDTTKASTETSVGATEGPQQKRQRLETLNWEQQQRQYPQTPSTQTTERASQPLDVTRTSDCDTTCPYTVGHPSDPDCAPVVHLKGDPNCLKCFRYRLHKGKRKLYCKTSSTWRWSCESENQAAFVTIWYTSYSQRNEFLSTVKVPPGIQVILGHMSMFV</sequence>
<accession>P0DKA4</accession>
<evidence type="ECO:0000250" key="1">
    <source>
        <dbReference type="UniProtKB" id="P0DKA0"/>
    </source>
</evidence>
<evidence type="ECO:0000256" key="2">
    <source>
        <dbReference type="SAM" id="MobiDB-lite"/>
    </source>
</evidence>
<evidence type="ECO:0000305" key="3"/>
<reference key="1">
    <citation type="submission" date="1995-10" db="EMBL/GenBank/DDBJ databases">
        <authorList>
            <person name="Delius H."/>
        </authorList>
    </citation>
    <scope>NUCLEOTIDE SEQUENCE [GENOMIC DNA]</scope>
</reference>
<keyword id="KW-1048">Host nucleus</keyword>
<dbReference type="EMBL" id="U31783">
    <property type="status" value="NOT_ANNOTATED_CDS"/>
    <property type="molecule type" value="Genomic_DNA"/>
</dbReference>
<dbReference type="SMR" id="P0DKA4"/>
<dbReference type="Proteomes" id="UP000009158">
    <property type="component" value="Genome"/>
</dbReference>
<dbReference type="GO" id="GO:0042025">
    <property type="term" value="C:host cell nucleus"/>
    <property type="evidence" value="ECO:0007669"/>
    <property type="project" value="UniProtKB-SubCell"/>
</dbReference>
<dbReference type="GO" id="GO:0003677">
    <property type="term" value="F:DNA binding"/>
    <property type="evidence" value="ECO:0007669"/>
    <property type="project" value="InterPro"/>
</dbReference>
<dbReference type="GO" id="GO:0003700">
    <property type="term" value="F:DNA-binding transcription factor activity"/>
    <property type="evidence" value="ECO:0007669"/>
    <property type="project" value="InterPro"/>
</dbReference>
<dbReference type="GO" id="GO:0006275">
    <property type="term" value="P:regulation of DNA replication"/>
    <property type="evidence" value="ECO:0007669"/>
    <property type="project" value="InterPro"/>
</dbReference>
<dbReference type="Gene3D" id="3.30.70.330">
    <property type="match status" value="1"/>
</dbReference>
<dbReference type="InterPro" id="IPR035975">
    <property type="entry name" value="E2/EBNA1_C_sf"/>
</dbReference>
<dbReference type="InterPro" id="IPR012677">
    <property type="entry name" value="Nucleotide-bd_a/b_plait_sf"/>
</dbReference>
<dbReference type="InterPro" id="IPR000427">
    <property type="entry name" value="Papillomavirus_E2_C"/>
</dbReference>
<dbReference type="Pfam" id="PF00511">
    <property type="entry name" value="PPV_E2_C"/>
    <property type="match status" value="1"/>
</dbReference>
<dbReference type="SUPFAM" id="SSF54957">
    <property type="entry name" value="Viral DNA-binding domain"/>
    <property type="match status" value="1"/>
</dbReference>